<accession>Q0SMS3</accession>
<accession>G0IQD5</accession>
<gene>
    <name evidence="1" type="primary">murD</name>
    <name type="ordered locus">BAPKO_0616</name>
    <name type="ordered locus">BafPKo_0601</name>
</gene>
<name>MURD_BORAP</name>
<evidence type="ECO:0000255" key="1">
    <source>
        <dbReference type="HAMAP-Rule" id="MF_00639"/>
    </source>
</evidence>
<evidence type="ECO:0000305" key="2"/>
<sequence length="451" mass="51147">MRLDEIKNLNFLVMGLGLNGGGVALSRFLLKHGAKLVITDLKSEAELALSIDSLRDFDDQIRYVLGKHDVNDFKKADIVVKNPSVRPNNKYLKLAKRVETDISLFLIFNKNPIIAVTGTKGKSTLVSLLYQALKKKYPRVKLGGNIGVSPLSFFDQLDGKSPLILELSSWQLQSLENFNPILSIITNVYNDHQNYYSNFDDYIIDKSKIFVNQTSGIVIIQDKAYYKYFSKFESKAKVILFSEFNPCNLDQDIFYSNKGEVYFNDNLIGSFFESQVVFMIPKLIAFFVAYYLNIDLNHMFQILKNFKGIEHRLEFVKLVRNVMFYNDTASTIPDSTVLSVKSLKTNDNCINLIVGGTDKNLDFSSFSKIINLVKAWILIKGSATVKIINVLEKSSIQYFVFDSLRGAVNYAFEISSPGDIVLFSPASASFELFNNEFDRGLQFKKLVDMLG</sequence>
<dbReference type="EC" id="6.3.2.9" evidence="1"/>
<dbReference type="EMBL" id="CP000395">
    <property type="protein sequence ID" value="ABH01855.1"/>
    <property type="molecule type" value="Genomic_DNA"/>
</dbReference>
<dbReference type="EMBL" id="CP002933">
    <property type="protein sequence ID" value="AEL69805.1"/>
    <property type="status" value="ALT_INIT"/>
    <property type="molecule type" value="Genomic_DNA"/>
</dbReference>
<dbReference type="RefSeq" id="WP_011601104.1">
    <property type="nucleotide sequence ID" value="NC_008277.1"/>
</dbReference>
<dbReference type="SMR" id="Q0SMS3"/>
<dbReference type="STRING" id="29518.BLA32_01340"/>
<dbReference type="KEGG" id="baf:BAPKO_0616"/>
<dbReference type="KEGG" id="bafz:BafPKo_0601"/>
<dbReference type="PATRIC" id="fig|390236.22.peg.578"/>
<dbReference type="eggNOG" id="COG0771">
    <property type="taxonomic scope" value="Bacteria"/>
</dbReference>
<dbReference type="HOGENOM" id="CLU_032540_0_1_12"/>
<dbReference type="OrthoDB" id="9809796at2"/>
<dbReference type="UniPathway" id="UPA00219"/>
<dbReference type="Proteomes" id="UP000005216">
    <property type="component" value="Chromosome"/>
</dbReference>
<dbReference type="GO" id="GO:0005737">
    <property type="term" value="C:cytoplasm"/>
    <property type="evidence" value="ECO:0007669"/>
    <property type="project" value="UniProtKB-SubCell"/>
</dbReference>
<dbReference type="GO" id="GO:0005524">
    <property type="term" value="F:ATP binding"/>
    <property type="evidence" value="ECO:0007669"/>
    <property type="project" value="UniProtKB-UniRule"/>
</dbReference>
<dbReference type="GO" id="GO:0008764">
    <property type="term" value="F:UDP-N-acetylmuramoylalanine-D-glutamate ligase activity"/>
    <property type="evidence" value="ECO:0007669"/>
    <property type="project" value="UniProtKB-UniRule"/>
</dbReference>
<dbReference type="GO" id="GO:0051301">
    <property type="term" value="P:cell division"/>
    <property type="evidence" value="ECO:0007669"/>
    <property type="project" value="UniProtKB-KW"/>
</dbReference>
<dbReference type="GO" id="GO:0071555">
    <property type="term" value="P:cell wall organization"/>
    <property type="evidence" value="ECO:0007669"/>
    <property type="project" value="UniProtKB-KW"/>
</dbReference>
<dbReference type="GO" id="GO:0009252">
    <property type="term" value="P:peptidoglycan biosynthetic process"/>
    <property type="evidence" value="ECO:0007669"/>
    <property type="project" value="UniProtKB-UniRule"/>
</dbReference>
<dbReference type="GO" id="GO:0008360">
    <property type="term" value="P:regulation of cell shape"/>
    <property type="evidence" value="ECO:0007669"/>
    <property type="project" value="UniProtKB-KW"/>
</dbReference>
<dbReference type="Gene3D" id="3.90.190.20">
    <property type="entry name" value="Mur ligase, C-terminal domain"/>
    <property type="match status" value="1"/>
</dbReference>
<dbReference type="Gene3D" id="3.40.1190.10">
    <property type="entry name" value="Mur-like, catalytic domain"/>
    <property type="match status" value="1"/>
</dbReference>
<dbReference type="Gene3D" id="3.40.50.720">
    <property type="entry name" value="NAD(P)-binding Rossmann-like Domain"/>
    <property type="match status" value="1"/>
</dbReference>
<dbReference type="HAMAP" id="MF_00639">
    <property type="entry name" value="MurD"/>
    <property type="match status" value="1"/>
</dbReference>
<dbReference type="InterPro" id="IPR036565">
    <property type="entry name" value="Mur-like_cat_sf"/>
</dbReference>
<dbReference type="InterPro" id="IPR004101">
    <property type="entry name" value="Mur_ligase_C"/>
</dbReference>
<dbReference type="InterPro" id="IPR036615">
    <property type="entry name" value="Mur_ligase_C_dom_sf"/>
</dbReference>
<dbReference type="InterPro" id="IPR013221">
    <property type="entry name" value="Mur_ligase_cen"/>
</dbReference>
<dbReference type="InterPro" id="IPR005762">
    <property type="entry name" value="MurD"/>
</dbReference>
<dbReference type="NCBIfam" id="TIGR01087">
    <property type="entry name" value="murD"/>
    <property type="match status" value="1"/>
</dbReference>
<dbReference type="PANTHER" id="PTHR43692">
    <property type="entry name" value="UDP-N-ACETYLMURAMOYLALANINE--D-GLUTAMATE LIGASE"/>
    <property type="match status" value="1"/>
</dbReference>
<dbReference type="PANTHER" id="PTHR43692:SF1">
    <property type="entry name" value="UDP-N-ACETYLMURAMOYLALANINE--D-GLUTAMATE LIGASE"/>
    <property type="match status" value="1"/>
</dbReference>
<dbReference type="Pfam" id="PF02875">
    <property type="entry name" value="Mur_ligase_C"/>
    <property type="match status" value="1"/>
</dbReference>
<dbReference type="Pfam" id="PF08245">
    <property type="entry name" value="Mur_ligase_M"/>
    <property type="match status" value="1"/>
</dbReference>
<dbReference type="Pfam" id="PF21799">
    <property type="entry name" value="MurD-like_N"/>
    <property type="match status" value="1"/>
</dbReference>
<dbReference type="SUPFAM" id="SSF51984">
    <property type="entry name" value="MurCD N-terminal domain"/>
    <property type="match status" value="1"/>
</dbReference>
<dbReference type="SUPFAM" id="SSF53623">
    <property type="entry name" value="MurD-like peptide ligases, catalytic domain"/>
    <property type="match status" value="1"/>
</dbReference>
<dbReference type="SUPFAM" id="SSF53244">
    <property type="entry name" value="MurD-like peptide ligases, peptide-binding domain"/>
    <property type="match status" value="1"/>
</dbReference>
<proteinExistence type="inferred from homology"/>
<organism>
    <name type="scientific">Borreliella afzelii (strain PKo)</name>
    <name type="common">Borrelia afzelii</name>
    <dbReference type="NCBI Taxonomy" id="390236"/>
    <lineage>
        <taxon>Bacteria</taxon>
        <taxon>Pseudomonadati</taxon>
        <taxon>Spirochaetota</taxon>
        <taxon>Spirochaetia</taxon>
        <taxon>Spirochaetales</taxon>
        <taxon>Borreliaceae</taxon>
        <taxon>Borreliella</taxon>
    </lineage>
</organism>
<comment type="function">
    <text evidence="1">Cell wall formation. Catalyzes the addition of glutamate to the nucleotide precursor UDP-N-acetylmuramoyl-L-alanine (UMA).</text>
</comment>
<comment type="catalytic activity">
    <reaction evidence="1">
        <text>UDP-N-acetyl-alpha-D-muramoyl-L-alanine + D-glutamate + ATP = UDP-N-acetyl-alpha-D-muramoyl-L-alanyl-D-glutamate + ADP + phosphate + H(+)</text>
        <dbReference type="Rhea" id="RHEA:16429"/>
        <dbReference type="ChEBI" id="CHEBI:15378"/>
        <dbReference type="ChEBI" id="CHEBI:29986"/>
        <dbReference type="ChEBI" id="CHEBI:30616"/>
        <dbReference type="ChEBI" id="CHEBI:43474"/>
        <dbReference type="ChEBI" id="CHEBI:83898"/>
        <dbReference type="ChEBI" id="CHEBI:83900"/>
        <dbReference type="ChEBI" id="CHEBI:456216"/>
        <dbReference type="EC" id="6.3.2.9"/>
    </reaction>
</comment>
<comment type="pathway">
    <text evidence="1">Cell wall biogenesis; peptidoglycan biosynthesis.</text>
</comment>
<comment type="subcellular location">
    <subcellularLocation>
        <location evidence="1">Cytoplasm</location>
    </subcellularLocation>
</comment>
<comment type="similarity">
    <text evidence="1">Belongs to the MurCDEF family.</text>
</comment>
<comment type="sequence caution" evidence="2">
    <conflict type="erroneous initiation">
        <sequence resource="EMBL-CDS" id="AEL69805"/>
    </conflict>
    <text>Truncated N-terminus.</text>
</comment>
<keyword id="KW-0067">ATP-binding</keyword>
<keyword id="KW-0131">Cell cycle</keyword>
<keyword id="KW-0132">Cell division</keyword>
<keyword id="KW-0133">Cell shape</keyword>
<keyword id="KW-0961">Cell wall biogenesis/degradation</keyword>
<keyword id="KW-0963">Cytoplasm</keyword>
<keyword id="KW-0436">Ligase</keyword>
<keyword id="KW-0547">Nucleotide-binding</keyword>
<keyword id="KW-0573">Peptidoglycan synthesis</keyword>
<feature type="chain" id="PRO_0000301416" description="UDP-N-acetylmuramoylalanine--D-glutamate ligase">
    <location>
        <begin position="1"/>
        <end position="451"/>
    </location>
</feature>
<feature type="binding site" evidence="1">
    <location>
        <begin position="118"/>
        <end position="124"/>
    </location>
    <ligand>
        <name>ATP</name>
        <dbReference type="ChEBI" id="CHEBI:30616"/>
    </ligand>
</feature>
<reference key="1">
    <citation type="journal article" date="2006" name="BMC Genomics">
        <title>Comparative genome analysis: selection pressure on the Borrelia vls cassettes is essential for infectivity.</title>
        <authorList>
            <person name="Gloeckner G."/>
            <person name="Schulte-Spechtel U."/>
            <person name="Schilhabel M."/>
            <person name="Felder M."/>
            <person name="Suehnel J."/>
            <person name="Wilske B."/>
            <person name="Platzer M."/>
        </authorList>
    </citation>
    <scope>NUCLEOTIDE SEQUENCE [LARGE SCALE GENOMIC DNA]</scope>
    <source>
        <strain>PKo</strain>
    </source>
</reference>
<reference key="2">
    <citation type="journal article" date="2011" name="J. Bacteriol.">
        <title>Whole-genome sequences of two Borrelia afzelii and two Borrelia garinii Lyme disease agent isolates.</title>
        <authorList>
            <person name="Casjens S.R."/>
            <person name="Mongodin E.F."/>
            <person name="Qiu W.G."/>
            <person name="Dunn J.J."/>
            <person name="Luft B.J."/>
            <person name="Fraser-Liggett C.M."/>
            <person name="Schutzer S.E."/>
        </authorList>
    </citation>
    <scope>NUCLEOTIDE SEQUENCE [LARGE SCALE GENOMIC DNA]</scope>
    <source>
        <strain>PKo</strain>
    </source>
</reference>
<protein>
    <recommendedName>
        <fullName evidence="1">UDP-N-acetylmuramoylalanine--D-glutamate ligase</fullName>
        <ecNumber evidence="1">6.3.2.9</ecNumber>
    </recommendedName>
    <alternativeName>
        <fullName evidence="1">D-glutamic acid-adding enzyme</fullName>
    </alternativeName>
    <alternativeName>
        <fullName evidence="1">UDP-N-acetylmuramoyl-L-alanyl-D-glutamate synthetase</fullName>
    </alternativeName>
</protein>